<proteinExistence type="inferred from homology"/>
<comment type="function">
    <text evidence="1">DEAD-box RNA helicase involved in RNA degradation. Has RNA-dependent ATPase activity and unwinds double-stranded RNA.</text>
</comment>
<comment type="catalytic activity">
    <reaction evidence="1">
        <text>ATP + H2O = ADP + phosphate + H(+)</text>
        <dbReference type="Rhea" id="RHEA:13065"/>
        <dbReference type="ChEBI" id="CHEBI:15377"/>
        <dbReference type="ChEBI" id="CHEBI:15378"/>
        <dbReference type="ChEBI" id="CHEBI:30616"/>
        <dbReference type="ChEBI" id="CHEBI:43474"/>
        <dbReference type="ChEBI" id="CHEBI:456216"/>
        <dbReference type="EC" id="3.6.4.13"/>
    </reaction>
</comment>
<comment type="subunit">
    <text evidence="1">Component of the RNA degradosome, which is a multiprotein complex involved in RNA processing and mRNA degradation.</text>
</comment>
<comment type="subcellular location">
    <subcellularLocation>
        <location evidence="1">Cytoplasm</location>
    </subcellularLocation>
</comment>
<comment type="similarity">
    <text evidence="1">Belongs to the DEAD box helicase family. RhlB subfamily.</text>
</comment>
<gene>
    <name evidence="1" type="primary">rhlB</name>
    <name type="ordered locus">HS_0174</name>
</gene>
<name>RHLB_HISS1</name>
<reference key="1">
    <citation type="journal article" date="2007" name="J. Bacteriol.">
        <title>Complete genome sequence of Haemophilus somnus (Histophilus somni) strain 129Pt and comparison to Haemophilus ducreyi 35000HP and Haemophilus influenzae Rd.</title>
        <authorList>
            <person name="Challacombe J.F."/>
            <person name="Duncan A.J."/>
            <person name="Brettin T.S."/>
            <person name="Bruce D."/>
            <person name="Chertkov O."/>
            <person name="Detter J.C."/>
            <person name="Han C.S."/>
            <person name="Misra M."/>
            <person name="Richardson P."/>
            <person name="Tapia R."/>
            <person name="Thayer N."/>
            <person name="Xie G."/>
            <person name="Inzana T.J."/>
        </authorList>
    </citation>
    <scope>NUCLEOTIDE SEQUENCE [LARGE SCALE GENOMIC DNA]</scope>
    <source>
        <strain>129Pt</strain>
    </source>
</reference>
<dbReference type="EC" id="3.6.4.13" evidence="1"/>
<dbReference type="EMBL" id="CP000436">
    <property type="protein sequence ID" value="ABI24452.1"/>
    <property type="molecule type" value="Genomic_DNA"/>
</dbReference>
<dbReference type="SMR" id="Q0I1X0"/>
<dbReference type="KEGG" id="hso:HS_0174"/>
<dbReference type="eggNOG" id="COG0513">
    <property type="taxonomic scope" value="Bacteria"/>
</dbReference>
<dbReference type="HOGENOM" id="CLU_003041_1_3_6"/>
<dbReference type="GO" id="GO:0005829">
    <property type="term" value="C:cytosol"/>
    <property type="evidence" value="ECO:0007669"/>
    <property type="project" value="TreeGrafter"/>
</dbReference>
<dbReference type="GO" id="GO:0005524">
    <property type="term" value="F:ATP binding"/>
    <property type="evidence" value="ECO:0007669"/>
    <property type="project" value="UniProtKB-UniRule"/>
</dbReference>
<dbReference type="GO" id="GO:0016887">
    <property type="term" value="F:ATP hydrolysis activity"/>
    <property type="evidence" value="ECO:0007669"/>
    <property type="project" value="RHEA"/>
</dbReference>
<dbReference type="GO" id="GO:0003723">
    <property type="term" value="F:RNA binding"/>
    <property type="evidence" value="ECO:0007669"/>
    <property type="project" value="UniProtKB-UniRule"/>
</dbReference>
<dbReference type="GO" id="GO:0003724">
    <property type="term" value="F:RNA helicase activity"/>
    <property type="evidence" value="ECO:0007669"/>
    <property type="project" value="UniProtKB-UniRule"/>
</dbReference>
<dbReference type="GO" id="GO:0006401">
    <property type="term" value="P:RNA catabolic process"/>
    <property type="evidence" value="ECO:0007669"/>
    <property type="project" value="UniProtKB-UniRule"/>
</dbReference>
<dbReference type="CDD" id="cd00268">
    <property type="entry name" value="DEADc"/>
    <property type="match status" value="1"/>
</dbReference>
<dbReference type="CDD" id="cd18787">
    <property type="entry name" value="SF2_C_DEAD"/>
    <property type="match status" value="1"/>
</dbReference>
<dbReference type="FunFam" id="3.40.50.300:FF:000312">
    <property type="entry name" value="ATP-dependent RNA helicase RhlB"/>
    <property type="match status" value="1"/>
</dbReference>
<dbReference type="Gene3D" id="3.40.50.300">
    <property type="entry name" value="P-loop containing nucleotide triphosphate hydrolases"/>
    <property type="match status" value="2"/>
</dbReference>
<dbReference type="HAMAP" id="MF_00661">
    <property type="entry name" value="DEAD_helicase_RhlB"/>
    <property type="match status" value="1"/>
</dbReference>
<dbReference type="InterPro" id="IPR011545">
    <property type="entry name" value="DEAD/DEAH_box_helicase_dom"/>
</dbReference>
<dbReference type="InterPro" id="IPR050079">
    <property type="entry name" value="DEAD_box_RNA_helicase"/>
</dbReference>
<dbReference type="InterPro" id="IPR014001">
    <property type="entry name" value="Helicase_ATP-bd"/>
</dbReference>
<dbReference type="InterPro" id="IPR001650">
    <property type="entry name" value="Helicase_C-like"/>
</dbReference>
<dbReference type="InterPro" id="IPR027417">
    <property type="entry name" value="P-loop_NTPase"/>
</dbReference>
<dbReference type="InterPro" id="IPR000629">
    <property type="entry name" value="RNA-helicase_DEAD-box_CS"/>
</dbReference>
<dbReference type="InterPro" id="IPR023554">
    <property type="entry name" value="RNA_helicase_ATP-dep_RhlB"/>
</dbReference>
<dbReference type="InterPro" id="IPR014014">
    <property type="entry name" value="RNA_helicase_DEAD_Q_motif"/>
</dbReference>
<dbReference type="NCBIfam" id="NF003419">
    <property type="entry name" value="PRK04837.1"/>
    <property type="match status" value="1"/>
</dbReference>
<dbReference type="PANTHER" id="PTHR47959:SF10">
    <property type="entry name" value="ATP-DEPENDENT RNA HELICASE RHLB"/>
    <property type="match status" value="1"/>
</dbReference>
<dbReference type="PANTHER" id="PTHR47959">
    <property type="entry name" value="ATP-DEPENDENT RNA HELICASE RHLE-RELATED"/>
    <property type="match status" value="1"/>
</dbReference>
<dbReference type="Pfam" id="PF00270">
    <property type="entry name" value="DEAD"/>
    <property type="match status" value="1"/>
</dbReference>
<dbReference type="Pfam" id="PF00271">
    <property type="entry name" value="Helicase_C"/>
    <property type="match status" value="1"/>
</dbReference>
<dbReference type="SMART" id="SM00487">
    <property type="entry name" value="DEXDc"/>
    <property type="match status" value="1"/>
</dbReference>
<dbReference type="SMART" id="SM00490">
    <property type="entry name" value="HELICc"/>
    <property type="match status" value="1"/>
</dbReference>
<dbReference type="SUPFAM" id="SSF52540">
    <property type="entry name" value="P-loop containing nucleoside triphosphate hydrolases"/>
    <property type="match status" value="1"/>
</dbReference>
<dbReference type="PROSITE" id="PS00039">
    <property type="entry name" value="DEAD_ATP_HELICASE"/>
    <property type="match status" value="1"/>
</dbReference>
<dbReference type="PROSITE" id="PS51192">
    <property type="entry name" value="HELICASE_ATP_BIND_1"/>
    <property type="match status" value="1"/>
</dbReference>
<dbReference type="PROSITE" id="PS51194">
    <property type="entry name" value="HELICASE_CTER"/>
    <property type="match status" value="1"/>
</dbReference>
<dbReference type="PROSITE" id="PS51195">
    <property type="entry name" value="Q_MOTIF"/>
    <property type="match status" value="1"/>
</dbReference>
<feature type="chain" id="PRO_1000082847" description="ATP-dependent RNA helicase RhlB">
    <location>
        <begin position="1"/>
        <end position="419"/>
    </location>
</feature>
<feature type="domain" description="Helicase ATP-binding" evidence="1">
    <location>
        <begin position="40"/>
        <end position="217"/>
    </location>
</feature>
<feature type="domain" description="Helicase C-terminal" evidence="1">
    <location>
        <begin position="241"/>
        <end position="388"/>
    </location>
</feature>
<feature type="short sequence motif" description="Q motif">
    <location>
        <begin position="9"/>
        <end position="37"/>
    </location>
</feature>
<feature type="short sequence motif" description="DEAD box">
    <location>
        <begin position="163"/>
        <end position="166"/>
    </location>
</feature>
<feature type="binding site" evidence="1">
    <location>
        <begin position="53"/>
        <end position="60"/>
    </location>
    <ligand>
        <name>ATP</name>
        <dbReference type="ChEBI" id="CHEBI:30616"/>
    </ligand>
</feature>
<accession>Q0I1X0</accession>
<evidence type="ECO:0000255" key="1">
    <source>
        <dbReference type="HAMAP-Rule" id="MF_00661"/>
    </source>
</evidence>
<organism>
    <name type="scientific">Histophilus somni (strain 129Pt)</name>
    <name type="common">Haemophilus somnus</name>
    <dbReference type="NCBI Taxonomy" id="205914"/>
    <lineage>
        <taxon>Bacteria</taxon>
        <taxon>Pseudomonadati</taxon>
        <taxon>Pseudomonadota</taxon>
        <taxon>Gammaproteobacteria</taxon>
        <taxon>Pasteurellales</taxon>
        <taxon>Pasteurellaceae</taxon>
        <taxon>Histophilus</taxon>
    </lineage>
</organism>
<sequence length="419" mass="47458">MQNSHLSQQRFSDLALHRSVQQAIKEKGFEFCTPIQALSLPITLKGQDIAGQAQTGTGKTIAFLTATFHHLLQKNNINSSEQPRALILAPTRELVVQIANDANFLVQATGLKTGLAYGGEGYDKQLKVIDQGIDILIGTTGRVIDYVKQGIIRLDYIQVVVLDEADRMFDLGFIRDIRYLLRKCPVPQQRLTMLFSATLSYKVRELAFEHMNDPQYVEIEPLQKTGHRIREELFYPSNQDKMALLMTLLEEEWPERCIIFSNTKHRCEEIWGYLSADGHRVGLLTGDVMQKKRLSLLKQFTDGTLDILVATDVAARGLHIPDVTHVFNYDLPDDCEDYVHRIGRTGRAGESGISISFACEEYAINLPAIEEYIGHSIPVSQYDAKALIEDLPTPHRIKRGAFDSRSNLQRTIKRLKKTY</sequence>
<protein>
    <recommendedName>
        <fullName evidence="1">ATP-dependent RNA helicase RhlB</fullName>
        <ecNumber evidence="1">3.6.4.13</ecNumber>
    </recommendedName>
</protein>
<keyword id="KW-0067">ATP-binding</keyword>
<keyword id="KW-0963">Cytoplasm</keyword>
<keyword id="KW-0347">Helicase</keyword>
<keyword id="KW-0378">Hydrolase</keyword>
<keyword id="KW-0547">Nucleotide-binding</keyword>
<keyword id="KW-0694">RNA-binding</keyword>